<accession>C1F686</accession>
<keyword id="KW-0997">Cell inner membrane</keyword>
<keyword id="KW-1003">Cell membrane</keyword>
<keyword id="KW-0407">Ion channel</keyword>
<keyword id="KW-0406">Ion transport</keyword>
<keyword id="KW-0472">Membrane</keyword>
<keyword id="KW-0479">Metal-binding</keyword>
<keyword id="KW-1185">Reference proteome</keyword>
<keyword id="KW-0915">Sodium</keyword>
<keyword id="KW-0812">Transmembrane</keyword>
<keyword id="KW-1133">Transmembrane helix</keyword>
<keyword id="KW-0813">Transport</keyword>
<organism>
    <name type="scientific">Acidobacterium capsulatum (strain ATCC 51196 / DSM 11244 / BCRC 80197 / JCM 7670 / NBRC 15755 / NCIMB 13165 / 161)</name>
    <dbReference type="NCBI Taxonomy" id="240015"/>
    <lineage>
        <taxon>Bacteria</taxon>
        <taxon>Pseudomonadati</taxon>
        <taxon>Acidobacteriota</taxon>
        <taxon>Terriglobia</taxon>
        <taxon>Terriglobales</taxon>
        <taxon>Acidobacteriaceae</taxon>
        <taxon>Acidobacterium</taxon>
    </lineage>
</organism>
<evidence type="ECO:0000255" key="1">
    <source>
        <dbReference type="HAMAP-Rule" id="MF_00454"/>
    </source>
</evidence>
<name>FLUC_ACIC5</name>
<dbReference type="EMBL" id="CP001472">
    <property type="protein sequence ID" value="ACO31877.1"/>
    <property type="molecule type" value="Genomic_DNA"/>
</dbReference>
<dbReference type="RefSeq" id="WP_015898349.1">
    <property type="nucleotide sequence ID" value="NC_012483.1"/>
</dbReference>
<dbReference type="SMR" id="C1F686"/>
<dbReference type="FunCoup" id="C1F686">
    <property type="interactions" value="263"/>
</dbReference>
<dbReference type="KEGG" id="aca:ACP_3316"/>
<dbReference type="eggNOG" id="COG0239">
    <property type="taxonomic scope" value="Bacteria"/>
</dbReference>
<dbReference type="HOGENOM" id="CLU_114342_3_2_0"/>
<dbReference type="InParanoid" id="C1F686"/>
<dbReference type="OrthoDB" id="9815830at2"/>
<dbReference type="Proteomes" id="UP000002207">
    <property type="component" value="Chromosome"/>
</dbReference>
<dbReference type="GO" id="GO:0005886">
    <property type="term" value="C:plasma membrane"/>
    <property type="evidence" value="ECO:0007669"/>
    <property type="project" value="UniProtKB-SubCell"/>
</dbReference>
<dbReference type="GO" id="GO:0062054">
    <property type="term" value="F:fluoride channel activity"/>
    <property type="evidence" value="ECO:0007669"/>
    <property type="project" value="UniProtKB-UniRule"/>
</dbReference>
<dbReference type="GO" id="GO:0046872">
    <property type="term" value="F:metal ion binding"/>
    <property type="evidence" value="ECO:0007669"/>
    <property type="project" value="UniProtKB-KW"/>
</dbReference>
<dbReference type="GO" id="GO:0140114">
    <property type="term" value="P:cellular detoxification of fluoride"/>
    <property type="evidence" value="ECO:0007669"/>
    <property type="project" value="UniProtKB-UniRule"/>
</dbReference>
<dbReference type="HAMAP" id="MF_00454">
    <property type="entry name" value="FluC"/>
    <property type="match status" value="1"/>
</dbReference>
<dbReference type="InterPro" id="IPR003691">
    <property type="entry name" value="FluC"/>
</dbReference>
<dbReference type="NCBIfam" id="TIGR00494">
    <property type="entry name" value="crcB"/>
    <property type="match status" value="1"/>
</dbReference>
<dbReference type="PANTHER" id="PTHR28259">
    <property type="entry name" value="FLUORIDE EXPORT PROTEIN 1-RELATED"/>
    <property type="match status" value="1"/>
</dbReference>
<dbReference type="PANTHER" id="PTHR28259:SF1">
    <property type="entry name" value="FLUORIDE EXPORT PROTEIN 1-RELATED"/>
    <property type="match status" value="1"/>
</dbReference>
<dbReference type="Pfam" id="PF02537">
    <property type="entry name" value="CRCB"/>
    <property type="match status" value="1"/>
</dbReference>
<protein>
    <recommendedName>
        <fullName evidence="1">Fluoride-specific ion channel FluC</fullName>
    </recommendedName>
</protein>
<comment type="function">
    <text evidence="1">Fluoride-specific ion channel. Important for reducing fluoride concentration in the cell, thus reducing its toxicity.</text>
</comment>
<comment type="catalytic activity">
    <reaction evidence="1">
        <text>fluoride(in) = fluoride(out)</text>
        <dbReference type="Rhea" id="RHEA:76159"/>
        <dbReference type="ChEBI" id="CHEBI:17051"/>
    </reaction>
    <physiologicalReaction direction="left-to-right" evidence="1">
        <dbReference type="Rhea" id="RHEA:76160"/>
    </physiologicalReaction>
</comment>
<comment type="activity regulation">
    <text evidence="1">Na(+) is not transported, but it plays an essential structural role and its presence is essential for fluoride channel function.</text>
</comment>
<comment type="subcellular location">
    <subcellularLocation>
        <location evidence="1">Cell inner membrane</location>
        <topology evidence="1">Multi-pass membrane protein</topology>
    </subcellularLocation>
</comment>
<comment type="similarity">
    <text evidence="1">Belongs to the fluoride channel Fluc/FEX (TC 1.A.43) family.</text>
</comment>
<reference key="1">
    <citation type="journal article" date="2009" name="Appl. Environ. Microbiol.">
        <title>Three genomes from the phylum Acidobacteria provide insight into the lifestyles of these microorganisms in soils.</title>
        <authorList>
            <person name="Ward N.L."/>
            <person name="Challacombe J.F."/>
            <person name="Janssen P.H."/>
            <person name="Henrissat B."/>
            <person name="Coutinho P.M."/>
            <person name="Wu M."/>
            <person name="Xie G."/>
            <person name="Haft D.H."/>
            <person name="Sait M."/>
            <person name="Badger J."/>
            <person name="Barabote R.D."/>
            <person name="Bradley B."/>
            <person name="Brettin T.S."/>
            <person name="Brinkac L.M."/>
            <person name="Bruce D."/>
            <person name="Creasy T."/>
            <person name="Daugherty S.C."/>
            <person name="Davidsen T.M."/>
            <person name="DeBoy R.T."/>
            <person name="Detter J.C."/>
            <person name="Dodson R.J."/>
            <person name="Durkin A.S."/>
            <person name="Ganapathy A."/>
            <person name="Gwinn-Giglio M."/>
            <person name="Han C.S."/>
            <person name="Khouri H."/>
            <person name="Kiss H."/>
            <person name="Kothari S.P."/>
            <person name="Madupu R."/>
            <person name="Nelson K.E."/>
            <person name="Nelson W.C."/>
            <person name="Paulsen I."/>
            <person name="Penn K."/>
            <person name="Ren Q."/>
            <person name="Rosovitz M.J."/>
            <person name="Selengut J.D."/>
            <person name="Shrivastava S."/>
            <person name="Sullivan S.A."/>
            <person name="Tapia R."/>
            <person name="Thompson L.S."/>
            <person name="Watkins K.L."/>
            <person name="Yang Q."/>
            <person name="Yu C."/>
            <person name="Zafar N."/>
            <person name="Zhou L."/>
            <person name="Kuske C.R."/>
        </authorList>
    </citation>
    <scope>NUCLEOTIDE SEQUENCE [LARGE SCALE GENOMIC DNA]</scope>
    <source>
        <strain>ATCC 51196 / DSM 11244 / BCRC 80197 / JCM 7670 / NBRC 15755 / NCIMB 13165 / 161</strain>
    </source>
</reference>
<gene>
    <name evidence="1" type="primary">fluC</name>
    <name evidence="1" type="synonym">crcB</name>
    <name type="ordered locus">ACP_3316</name>
</gene>
<proteinExistence type="inferred from homology"/>
<sequence>MKYLWVALGGALGALARYTVGVWIYERLGTRFPYGTFAINVTGCFLIGLALTVLDAHMDLSPAWRLAIPTGFIGAYTTFSTFEYETLRAAQHGQMGTAVLYFGSSLALGILAVWLGMVVGNRIVA</sequence>
<feature type="chain" id="PRO_1000135311" description="Fluoride-specific ion channel FluC">
    <location>
        <begin position="1"/>
        <end position="125"/>
    </location>
</feature>
<feature type="transmembrane region" description="Helical" evidence="1">
    <location>
        <begin position="4"/>
        <end position="24"/>
    </location>
</feature>
<feature type="transmembrane region" description="Helical" evidence="1">
    <location>
        <begin position="34"/>
        <end position="54"/>
    </location>
</feature>
<feature type="transmembrane region" description="Helical" evidence="1">
    <location>
        <begin position="99"/>
        <end position="119"/>
    </location>
</feature>
<feature type="binding site" evidence="1">
    <location>
        <position position="74"/>
    </location>
    <ligand>
        <name>Na(+)</name>
        <dbReference type="ChEBI" id="CHEBI:29101"/>
        <note>structural</note>
    </ligand>
</feature>
<feature type="binding site" evidence="1">
    <location>
        <position position="77"/>
    </location>
    <ligand>
        <name>Na(+)</name>
        <dbReference type="ChEBI" id="CHEBI:29101"/>
        <note>structural</note>
    </ligand>
</feature>